<dbReference type="EC" id="2.1.2.3" evidence="1"/>
<dbReference type="EC" id="3.5.4.10" evidence="1"/>
<dbReference type="EMBL" id="CP001055">
    <property type="protein sequence ID" value="ACC98078.1"/>
    <property type="molecule type" value="Genomic_DNA"/>
</dbReference>
<dbReference type="RefSeq" id="WP_012414693.1">
    <property type="nucleotide sequence ID" value="NC_010644.1"/>
</dbReference>
<dbReference type="SMR" id="B2KCF7"/>
<dbReference type="STRING" id="445932.Emin_0523"/>
<dbReference type="KEGG" id="emi:Emin_0523"/>
<dbReference type="HOGENOM" id="CLU_016316_5_2_0"/>
<dbReference type="OrthoDB" id="9802065at2"/>
<dbReference type="UniPathway" id="UPA00074">
    <property type="reaction ID" value="UER00133"/>
</dbReference>
<dbReference type="UniPathway" id="UPA00074">
    <property type="reaction ID" value="UER00135"/>
</dbReference>
<dbReference type="Proteomes" id="UP000001029">
    <property type="component" value="Chromosome"/>
</dbReference>
<dbReference type="GO" id="GO:0005829">
    <property type="term" value="C:cytosol"/>
    <property type="evidence" value="ECO:0007669"/>
    <property type="project" value="TreeGrafter"/>
</dbReference>
<dbReference type="GO" id="GO:0003937">
    <property type="term" value="F:IMP cyclohydrolase activity"/>
    <property type="evidence" value="ECO:0007669"/>
    <property type="project" value="UniProtKB-UniRule"/>
</dbReference>
<dbReference type="GO" id="GO:0004643">
    <property type="term" value="F:phosphoribosylaminoimidazolecarboxamide formyltransferase activity"/>
    <property type="evidence" value="ECO:0007669"/>
    <property type="project" value="UniProtKB-UniRule"/>
</dbReference>
<dbReference type="GO" id="GO:0006189">
    <property type="term" value="P:'de novo' IMP biosynthetic process"/>
    <property type="evidence" value="ECO:0007669"/>
    <property type="project" value="UniProtKB-UniRule"/>
</dbReference>
<dbReference type="CDD" id="cd01421">
    <property type="entry name" value="IMPCH"/>
    <property type="match status" value="1"/>
</dbReference>
<dbReference type="FunFam" id="3.40.140.20:FF:000001">
    <property type="entry name" value="Bifunctional purine biosynthesis protein PurH"/>
    <property type="match status" value="1"/>
</dbReference>
<dbReference type="FunFam" id="3.40.50.1380:FF:000001">
    <property type="entry name" value="Bifunctional purine biosynthesis protein PurH"/>
    <property type="match status" value="1"/>
</dbReference>
<dbReference type="Gene3D" id="3.40.140.20">
    <property type="match status" value="2"/>
</dbReference>
<dbReference type="Gene3D" id="3.40.50.1380">
    <property type="entry name" value="Methylglyoxal synthase-like domain"/>
    <property type="match status" value="1"/>
</dbReference>
<dbReference type="HAMAP" id="MF_00139">
    <property type="entry name" value="PurH"/>
    <property type="match status" value="1"/>
</dbReference>
<dbReference type="InterPro" id="IPR024051">
    <property type="entry name" value="AICAR_Tfase_dup_dom_sf"/>
</dbReference>
<dbReference type="InterPro" id="IPR016193">
    <property type="entry name" value="Cytidine_deaminase-like"/>
</dbReference>
<dbReference type="InterPro" id="IPR011607">
    <property type="entry name" value="MGS-like_dom"/>
</dbReference>
<dbReference type="InterPro" id="IPR036914">
    <property type="entry name" value="MGS-like_dom_sf"/>
</dbReference>
<dbReference type="InterPro" id="IPR002695">
    <property type="entry name" value="PurH-like"/>
</dbReference>
<dbReference type="NCBIfam" id="NF002049">
    <property type="entry name" value="PRK00881.1"/>
    <property type="match status" value="1"/>
</dbReference>
<dbReference type="NCBIfam" id="TIGR00355">
    <property type="entry name" value="purH"/>
    <property type="match status" value="1"/>
</dbReference>
<dbReference type="PANTHER" id="PTHR11692:SF0">
    <property type="entry name" value="BIFUNCTIONAL PURINE BIOSYNTHESIS PROTEIN ATIC"/>
    <property type="match status" value="1"/>
</dbReference>
<dbReference type="PANTHER" id="PTHR11692">
    <property type="entry name" value="BIFUNCTIONAL PURINE BIOSYNTHESIS PROTEIN PURH"/>
    <property type="match status" value="1"/>
</dbReference>
<dbReference type="Pfam" id="PF01808">
    <property type="entry name" value="AICARFT_IMPCHas"/>
    <property type="match status" value="1"/>
</dbReference>
<dbReference type="Pfam" id="PF02142">
    <property type="entry name" value="MGS"/>
    <property type="match status" value="1"/>
</dbReference>
<dbReference type="PIRSF" id="PIRSF000414">
    <property type="entry name" value="AICARFT_IMPCHas"/>
    <property type="match status" value="1"/>
</dbReference>
<dbReference type="SMART" id="SM00798">
    <property type="entry name" value="AICARFT_IMPCHas"/>
    <property type="match status" value="1"/>
</dbReference>
<dbReference type="SMART" id="SM00851">
    <property type="entry name" value="MGS"/>
    <property type="match status" value="1"/>
</dbReference>
<dbReference type="SUPFAM" id="SSF53927">
    <property type="entry name" value="Cytidine deaminase-like"/>
    <property type="match status" value="1"/>
</dbReference>
<dbReference type="SUPFAM" id="SSF52335">
    <property type="entry name" value="Methylglyoxal synthase-like"/>
    <property type="match status" value="1"/>
</dbReference>
<dbReference type="PROSITE" id="PS51855">
    <property type="entry name" value="MGS"/>
    <property type="match status" value="1"/>
</dbReference>
<proteinExistence type="inferred from homology"/>
<comment type="catalytic activity">
    <reaction evidence="1">
        <text>(6R)-10-formyltetrahydrofolate + 5-amino-1-(5-phospho-beta-D-ribosyl)imidazole-4-carboxamide = 5-formamido-1-(5-phospho-D-ribosyl)imidazole-4-carboxamide + (6S)-5,6,7,8-tetrahydrofolate</text>
        <dbReference type="Rhea" id="RHEA:22192"/>
        <dbReference type="ChEBI" id="CHEBI:57453"/>
        <dbReference type="ChEBI" id="CHEBI:58467"/>
        <dbReference type="ChEBI" id="CHEBI:58475"/>
        <dbReference type="ChEBI" id="CHEBI:195366"/>
        <dbReference type="EC" id="2.1.2.3"/>
    </reaction>
</comment>
<comment type="catalytic activity">
    <reaction evidence="1">
        <text>IMP + H2O = 5-formamido-1-(5-phospho-D-ribosyl)imidazole-4-carboxamide</text>
        <dbReference type="Rhea" id="RHEA:18445"/>
        <dbReference type="ChEBI" id="CHEBI:15377"/>
        <dbReference type="ChEBI" id="CHEBI:58053"/>
        <dbReference type="ChEBI" id="CHEBI:58467"/>
        <dbReference type="EC" id="3.5.4.10"/>
    </reaction>
</comment>
<comment type="pathway">
    <text evidence="1">Purine metabolism; IMP biosynthesis via de novo pathway; 5-formamido-1-(5-phospho-D-ribosyl)imidazole-4-carboxamide from 5-amino-1-(5-phospho-D-ribosyl)imidazole-4-carboxamide (10-formyl THF route): step 1/1.</text>
</comment>
<comment type="pathway">
    <text evidence="1">Purine metabolism; IMP biosynthesis via de novo pathway; IMP from 5-formamido-1-(5-phospho-D-ribosyl)imidazole-4-carboxamide: step 1/1.</text>
</comment>
<comment type="domain">
    <text evidence="1">The IMP cyclohydrolase activity resides in the N-terminal region.</text>
</comment>
<comment type="similarity">
    <text evidence="1">Belongs to the PurH family.</text>
</comment>
<sequence length="517" mass="57049">MTQERKIKRALISVSDKTGLEVFAKGLHKLGVELVSTSGTAKFLKAAGLPVRDLSDLTGFPEILDGRVKTLHPRVHGAILYKRDDDAHCKVIKDMGIEDIDMLVVNLYPFRETAAKAKHSFDAEVIENIDIGGPSMLRSAAKNFAHVAVLCRPKDYEVVLSEMAASQGALSYATRQRLCVEAFTHTAEYDAAISEEFKKGLNHEFPESKIVVLHKTQDLRYGENPHQKAVLYSQKKDFSFEQLHGKELSYNNILDAFGTWDAVCDFDLPACVIFKHVTPCGIGTGKVLTEAFNNAWACDPKSAFGGIIALNKPMQRDIAEAISKVFIEAVCAPDYDLESLEILKQKKNIRILKRNSPLSAAYQLKSVGDEVLLQQPDRTLLLDNKWDCVTKRKPTEEEDKALKFAWASVKHVKSNAVILTSESASVGIGAGQMSRVDSVKMAGMKFEEYLQENKKPKVLVIGSDAFFPFRDGVDAAAKLGVSAIVQPGGSVRDEEAIAAADEHGIAMIFTGLRHFRH</sequence>
<organism>
    <name type="scientific">Elusimicrobium minutum (strain Pei191)</name>
    <dbReference type="NCBI Taxonomy" id="445932"/>
    <lineage>
        <taxon>Bacteria</taxon>
        <taxon>Pseudomonadati</taxon>
        <taxon>Elusimicrobiota</taxon>
        <taxon>Elusimicrobia</taxon>
        <taxon>Elusimicrobiales</taxon>
        <taxon>Elusimicrobiaceae</taxon>
        <taxon>Elusimicrobium</taxon>
    </lineage>
</organism>
<keyword id="KW-0378">Hydrolase</keyword>
<keyword id="KW-0511">Multifunctional enzyme</keyword>
<keyword id="KW-0658">Purine biosynthesis</keyword>
<keyword id="KW-1185">Reference proteome</keyword>
<keyword id="KW-0808">Transferase</keyword>
<feature type="chain" id="PRO_1000096063" description="Bifunctional purine biosynthesis protein PurH">
    <location>
        <begin position="1"/>
        <end position="517"/>
    </location>
</feature>
<feature type="domain" description="MGS-like" evidence="2">
    <location>
        <begin position="1"/>
        <end position="151"/>
    </location>
</feature>
<gene>
    <name evidence="1" type="primary">purH</name>
    <name type="ordered locus">Emin_0523</name>
</gene>
<name>PUR9_ELUMP</name>
<reference key="1">
    <citation type="journal article" date="2009" name="Appl. Environ. Microbiol.">
        <title>Genomic analysis of 'Elusimicrobium minutum,' the first cultivated representative of the phylum 'Elusimicrobia' (formerly termite group 1).</title>
        <authorList>
            <person name="Herlemann D.P.R."/>
            <person name="Geissinger O."/>
            <person name="Ikeda-Ohtsubo W."/>
            <person name="Kunin V."/>
            <person name="Sun H."/>
            <person name="Lapidus A."/>
            <person name="Hugenholtz P."/>
            <person name="Brune A."/>
        </authorList>
    </citation>
    <scope>NUCLEOTIDE SEQUENCE [LARGE SCALE GENOMIC DNA]</scope>
    <source>
        <strain>Pei191</strain>
    </source>
</reference>
<evidence type="ECO:0000255" key="1">
    <source>
        <dbReference type="HAMAP-Rule" id="MF_00139"/>
    </source>
</evidence>
<evidence type="ECO:0000255" key="2">
    <source>
        <dbReference type="PROSITE-ProRule" id="PRU01202"/>
    </source>
</evidence>
<accession>B2KCF7</accession>
<protein>
    <recommendedName>
        <fullName evidence="1">Bifunctional purine biosynthesis protein PurH</fullName>
    </recommendedName>
    <domain>
        <recommendedName>
            <fullName evidence="1">Phosphoribosylaminoimidazolecarboxamide formyltransferase</fullName>
            <ecNumber evidence="1">2.1.2.3</ecNumber>
        </recommendedName>
        <alternativeName>
            <fullName evidence="1">AICAR transformylase</fullName>
        </alternativeName>
    </domain>
    <domain>
        <recommendedName>
            <fullName evidence="1">IMP cyclohydrolase</fullName>
            <ecNumber evidence="1">3.5.4.10</ecNumber>
        </recommendedName>
        <alternativeName>
            <fullName evidence="1">ATIC</fullName>
        </alternativeName>
        <alternativeName>
            <fullName evidence="1">IMP synthase</fullName>
        </alternativeName>
        <alternativeName>
            <fullName evidence="1">Inosinicase</fullName>
        </alternativeName>
    </domain>
</protein>